<comment type="cofactor">
    <cofactor evidence="1">
        <name>Zn(2+)</name>
        <dbReference type="ChEBI" id="CHEBI:29105"/>
    </cofactor>
</comment>
<comment type="similarity">
    <text evidence="3">Belongs to the peptidase M18 family.</text>
</comment>
<keyword id="KW-0031">Aminopeptidase</keyword>
<keyword id="KW-0378">Hydrolase</keyword>
<keyword id="KW-0479">Metal-binding</keyword>
<keyword id="KW-0482">Metalloprotease</keyword>
<keyword id="KW-0645">Protease</keyword>
<keyword id="KW-1185">Reference proteome</keyword>
<keyword id="KW-0862">Zinc</keyword>
<reference key="1">
    <citation type="journal article" date="2002" name="Nature">
        <title>Complete genome sequence of the model actinomycete Streptomyces coelicolor A3(2).</title>
        <authorList>
            <person name="Bentley S.D."/>
            <person name="Chater K.F."/>
            <person name="Cerdeno-Tarraga A.-M."/>
            <person name="Challis G.L."/>
            <person name="Thomson N.R."/>
            <person name="James K.D."/>
            <person name="Harris D.E."/>
            <person name="Quail M.A."/>
            <person name="Kieser H."/>
            <person name="Harper D."/>
            <person name="Bateman A."/>
            <person name="Brown S."/>
            <person name="Chandra G."/>
            <person name="Chen C.W."/>
            <person name="Collins M."/>
            <person name="Cronin A."/>
            <person name="Fraser A."/>
            <person name="Goble A."/>
            <person name="Hidalgo J."/>
            <person name="Hornsby T."/>
            <person name="Howarth S."/>
            <person name="Huang C.-H."/>
            <person name="Kieser T."/>
            <person name="Larke L."/>
            <person name="Murphy L.D."/>
            <person name="Oliver K."/>
            <person name="O'Neil S."/>
            <person name="Rabbinowitsch E."/>
            <person name="Rajandream M.A."/>
            <person name="Rutherford K.M."/>
            <person name="Rutter S."/>
            <person name="Seeger K."/>
            <person name="Saunders D."/>
            <person name="Sharp S."/>
            <person name="Squares R."/>
            <person name="Squares S."/>
            <person name="Taylor K."/>
            <person name="Warren T."/>
            <person name="Wietzorrek A."/>
            <person name="Woodward J.R."/>
            <person name="Barrell B.G."/>
            <person name="Parkhill J."/>
            <person name="Hopwood D.A."/>
        </authorList>
    </citation>
    <scope>NUCLEOTIDE SEQUENCE [LARGE SCALE GENOMIC DNA]</scope>
    <source>
        <strain>ATCC BAA-471 / A3(2) / M145</strain>
    </source>
</reference>
<feature type="chain" id="PRO_0000173469" description="Probable M18 family aminopeptidase 2">
    <location>
        <begin position="1"/>
        <end position="432"/>
    </location>
</feature>
<feature type="binding site" evidence="2">
    <location>
        <position position="86"/>
    </location>
    <ligand>
        <name>Zn(2+)</name>
        <dbReference type="ChEBI" id="CHEBI:29105"/>
    </ligand>
</feature>
<feature type="binding site" evidence="2">
    <location>
        <position position="157"/>
    </location>
    <ligand>
        <name>Zn(2+)</name>
        <dbReference type="ChEBI" id="CHEBI:29105"/>
    </ligand>
</feature>
<feature type="binding site" evidence="2">
    <location>
        <position position="408"/>
    </location>
    <ligand>
        <name>Zn(2+)</name>
        <dbReference type="ChEBI" id="CHEBI:29105"/>
    </ligand>
</feature>
<proteinExistence type="inferred from homology"/>
<dbReference type="EC" id="3.4.11.-"/>
<dbReference type="EMBL" id="AL939117">
    <property type="protein sequence ID" value="CAB46924.1"/>
    <property type="molecule type" value="Genomic_DNA"/>
</dbReference>
<dbReference type="PIR" id="T36482">
    <property type="entry name" value="T36482"/>
</dbReference>
<dbReference type="RefSeq" id="NP_627990.1">
    <property type="nucleotide sequence ID" value="NC_003888.3"/>
</dbReference>
<dbReference type="RefSeq" id="WP_003975140.1">
    <property type="nucleotide sequence ID" value="NZ_VNID01000003.1"/>
</dbReference>
<dbReference type="SMR" id="Q9XA76"/>
<dbReference type="FunCoup" id="Q9XA76">
    <property type="interactions" value="370"/>
</dbReference>
<dbReference type="STRING" id="100226.gene:17761425"/>
<dbReference type="PaxDb" id="100226-SCO3801"/>
<dbReference type="KEGG" id="sco:SCO3801"/>
<dbReference type="PATRIC" id="fig|100226.15.peg.3869"/>
<dbReference type="eggNOG" id="COG1362">
    <property type="taxonomic scope" value="Bacteria"/>
</dbReference>
<dbReference type="HOGENOM" id="CLU_019532_2_0_11"/>
<dbReference type="InParanoid" id="Q9XA76"/>
<dbReference type="OrthoDB" id="5288740at2"/>
<dbReference type="PhylomeDB" id="Q9XA76"/>
<dbReference type="Proteomes" id="UP000001973">
    <property type="component" value="Chromosome"/>
</dbReference>
<dbReference type="GO" id="GO:0005737">
    <property type="term" value="C:cytoplasm"/>
    <property type="evidence" value="ECO:0007669"/>
    <property type="project" value="UniProtKB-ARBA"/>
</dbReference>
<dbReference type="GO" id="GO:0004177">
    <property type="term" value="F:aminopeptidase activity"/>
    <property type="evidence" value="ECO:0007669"/>
    <property type="project" value="UniProtKB-UniRule"/>
</dbReference>
<dbReference type="GO" id="GO:0008237">
    <property type="term" value="F:metallopeptidase activity"/>
    <property type="evidence" value="ECO:0007669"/>
    <property type="project" value="UniProtKB-UniRule"/>
</dbReference>
<dbReference type="GO" id="GO:0008270">
    <property type="term" value="F:zinc ion binding"/>
    <property type="evidence" value="ECO:0007669"/>
    <property type="project" value="UniProtKB-UniRule"/>
</dbReference>
<dbReference type="GO" id="GO:0006508">
    <property type="term" value="P:proteolysis"/>
    <property type="evidence" value="ECO:0007669"/>
    <property type="project" value="UniProtKB-UniRule"/>
</dbReference>
<dbReference type="CDD" id="cd05658">
    <property type="entry name" value="M18_DAP"/>
    <property type="match status" value="1"/>
</dbReference>
<dbReference type="FunFam" id="2.30.250.10:FF:000004">
    <property type="entry name" value="Probable M18 family aminopeptidase 2"/>
    <property type="match status" value="1"/>
</dbReference>
<dbReference type="Gene3D" id="2.30.250.10">
    <property type="entry name" value="Aminopeptidase i, Domain 2"/>
    <property type="match status" value="1"/>
</dbReference>
<dbReference type="Gene3D" id="3.40.630.10">
    <property type="entry name" value="Zn peptidases"/>
    <property type="match status" value="1"/>
</dbReference>
<dbReference type="HAMAP" id="MF_00467">
    <property type="entry name" value="Aminopeptidase_M18_2"/>
    <property type="match status" value="1"/>
</dbReference>
<dbReference type="InterPro" id="IPR022984">
    <property type="entry name" value="M18_aminopeptidase_2"/>
</dbReference>
<dbReference type="InterPro" id="IPR001948">
    <property type="entry name" value="Peptidase_M18"/>
</dbReference>
<dbReference type="InterPro" id="IPR023358">
    <property type="entry name" value="Peptidase_M18_dom2"/>
</dbReference>
<dbReference type="NCBIfam" id="NF002759">
    <property type="entry name" value="PRK02813.1"/>
    <property type="match status" value="1"/>
</dbReference>
<dbReference type="PANTHER" id="PTHR28570">
    <property type="entry name" value="ASPARTYL AMINOPEPTIDASE"/>
    <property type="match status" value="1"/>
</dbReference>
<dbReference type="PANTHER" id="PTHR28570:SF3">
    <property type="entry name" value="ASPARTYL AMINOPEPTIDASE"/>
    <property type="match status" value="1"/>
</dbReference>
<dbReference type="Pfam" id="PF02127">
    <property type="entry name" value="Peptidase_M18"/>
    <property type="match status" value="1"/>
</dbReference>
<dbReference type="PRINTS" id="PR00932">
    <property type="entry name" value="AMINO1PTASE"/>
</dbReference>
<dbReference type="SUPFAM" id="SSF101821">
    <property type="entry name" value="Aminopeptidase/glucanase lid domain"/>
    <property type="match status" value="1"/>
</dbReference>
<dbReference type="SUPFAM" id="SSF53187">
    <property type="entry name" value="Zn-dependent exopeptidases"/>
    <property type="match status" value="1"/>
</dbReference>
<protein>
    <recommendedName>
        <fullName>Probable M18 family aminopeptidase 2</fullName>
        <ecNumber>3.4.11.-</ecNumber>
    </recommendedName>
</protein>
<organism>
    <name type="scientific">Streptomyces coelicolor (strain ATCC BAA-471 / A3(2) / M145)</name>
    <dbReference type="NCBI Taxonomy" id="100226"/>
    <lineage>
        <taxon>Bacteria</taxon>
        <taxon>Bacillati</taxon>
        <taxon>Actinomycetota</taxon>
        <taxon>Actinomycetes</taxon>
        <taxon>Kitasatosporales</taxon>
        <taxon>Streptomycetaceae</taxon>
        <taxon>Streptomyces</taxon>
        <taxon>Streptomyces albidoflavus group</taxon>
    </lineage>
</organism>
<name>APEB_STRCO</name>
<sequence>MSAPSRFDRGHTDDLMTFLSASPTPYHAVASAAARLEKAGFRQVAETDAWEATSGGKYVLRGGAIVAWYVPEGAAAHTPFRIVGAHTDSPNLRVKPRPDTGAHGWRQVAVEIYGGPLMNSWLDRDLGLAGRLSLRDGSTRLVDVDRPLLRVPQLAIHMDRNVSTEGLKLDKQRHLQPVWGLGDSVRDGDLIAFLEDEAGLARGEVTGWDLMTHSVEPPAYLGRDRELVAGPRMDNLLSVHAGTAALASVAASGADLPYIPVLAAFDHEETGSQSDTGADGPLLGGVLERSVFARGGSYEDRARAFAGTVCLSSDTGHAVHPNYAERHDPTHHPRINGGPILKVNVNNRYATDGSGRAVFAAACEKADIPFQTFVSNNSMPCGTTIGPITAARHGISTVDIGVAILSMHSARELCGADDPHLLANALVAFLQP</sequence>
<gene>
    <name type="primary">apeB</name>
    <name type="ordered locus">SCO3801</name>
    <name type="ORF">SCGD3.02</name>
</gene>
<evidence type="ECO:0000250" key="1"/>
<evidence type="ECO:0000255" key="2"/>
<evidence type="ECO:0000305" key="3"/>
<accession>Q9XA76</accession>